<feature type="chain" id="PRO_0000230041" description="Glutamate 5-kinase">
    <location>
        <begin position="1"/>
        <end position="377"/>
    </location>
</feature>
<feature type="domain" description="PUA" evidence="1">
    <location>
        <begin position="281"/>
        <end position="355"/>
    </location>
</feature>
<feature type="binding site" evidence="1">
    <location>
        <position position="20"/>
    </location>
    <ligand>
        <name>ATP</name>
        <dbReference type="ChEBI" id="CHEBI:30616"/>
    </ligand>
</feature>
<feature type="binding site" evidence="1">
    <location>
        <position position="60"/>
    </location>
    <ligand>
        <name>substrate</name>
    </ligand>
</feature>
<feature type="binding site" evidence="1">
    <location>
        <position position="147"/>
    </location>
    <ligand>
        <name>substrate</name>
    </ligand>
</feature>
<feature type="binding site" evidence="1">
    <location>
        <position position="159"/>
    </location>
    <ligand>
        <name>substrate</name>
    </ligand>
</feature>
<feature type="binding site" evidence="1">
    <location>
        <begin position="179"/>
        <end position="180"/>
    </location>
    <ligand>
        <name>ATP</name>
        <dbReference type="ChEBI" id="CHEBI:30616"/>
    </ligand>
</feature>
<name>PROB_CORJK</name>
<proteinExistence type="inferred from homology"/>
<accession>Q4JWT5</accession>
<sequence length="377" mass="40151">MGHDSDVRADIAHARRLVVKIGSSSLTDDDGRVDPNQIDMIADALEARMARDTDLIVVSSGAVACGMGPLELAQRPTDLATKQAAASVGQVLLAQEWARSFARYGRTIGQVLLTASDAAERDRARNAQRTIDRLRQLKAVPIVNENDTVATSEMRFGDNDRLAALVSHLAFADACVLLSDVDGLYDRNPAEPGAQFIAEVKSSKDLKGVAAGDGGRLGTGGMAAKVSAARLASRAGVPVLLTSTENIGAALDTAEVGTCFWPDQDRLSAWKFWVLYAADSHGQLHLDAGAVHAVTENHKSLLSVGITKVEGDFSQRDVVDLVGPDGNIVGRGEVAYDSAMLHDLIGQSTSDLPEFARRPVVHADYMSHYSNRAQLKG</sequence>
<comment type="function">
    <text evidence="1">Catalyzes the transfer of a phosphate group to glutamate to form L-glutamate 5-phosphate.</text>
</comment>
<comment type="catalytic activity">
    <reaction evidence="1">
        <text>L-glutamate + ATP = L-glutamyl 5-phosphate + ADP</text>
        <dbReference type="Rhea" id="RHEA:14877"/>
        <dbReference type="ChEBI" id="CHEBI:29985"/>
        <dbReference type="ChEBI" id="CHEBI:30616"/>
        <dbReference type="ChEBI" id="CHEBI:58274"/>
        <dbReference type="ChEBI" id="CHEBI:456216"/>
        <dbReference type="EC" id="2.7.2.11"/>
    </reaction>
</comment>
<comment type="pathway">
    <text evidence="1">Amino-acid biosynthesis; L-proline biosynthesis; L-glutamate 5-semialdehyde from L-glutamate: step 1/2.</text>
</comment>
<comment type="subcellular location">
    <subcellularLocation>
        <location evidence="1">Cytoplasm</location>
    </subcellularLocation>
</comment>
<comment type="similarity">
    <text evidence="1">Belongs to the glutamate 5-kinase family.</text>
</comment>
<comment type="sequence caution" evidence="2">
    <conflict type="erroneous initiation">
        <sequence resource="EMBL-CDS" id="CAI36722"/>
    </conflict>
</comment>
<reference key="1">
    <citation type="journal article" date="2005" name="J. Bacteriol.">
        <title>Complete genome sequence and analysis of the multiresistant nosocomial pathogen Corynebacterium jeikeium K411, a lipid-requiring bacterium of the human skin flora.</title>
        <authorList>
            <person name="Tauch A."/>
            <person name="Kaiser O."/>
            <person name="Hain T."/>
            <person name="Goesmann A."/>
            <person name="Weisshaar B."/>
            <person name="Albersmeier A."/>
            <person name="Bekel T."/>
            <person name="Bischoff N."/>
            <person name="Brune I."/>
            <person name="Chakraborty T."/>
            <person name="Kalinowski J."/>
            <person name="Meyer F."/>
            <person name="Rupp O."/>
            <person name="Schneiker S."/>
            <person name="Viehoever P."/>
            <person name="Puehler A."/>
        </authorList>
    </citation>
    <scope>NUCLEOTIDE SEQUENCE [LARGE SCALE GENOMIC DNA]</scope>
    <source>
        <strain>K411</strain>
    </source>
</reference>
<protein>
    <recommendedName>
        <fullName evidence="1">Glutamate 5-kinase</fullName>
        <ecNumber evidence="1">2.7.2.11</ecNumber>
    </recommendedName>
    <alternativeName>
        <fullName evidence="1">Gamma-glutamyl kinase</fullName>
        <shortName evidence="1">GK</shortName>
    </alternativeName>
</protein>
<organism>
    <name type="scientific">Corynebacterium jeikeium (strain K411)</name>
    <dbReference type="NCBI Taxonomy" id="306537"/>
    <lineage>
        <taxon>Bacteria</taxon>
        <taxon>Bacillati</taxon>
        <taxon>Actinomycetota</taxon>
        <taxon>Actinomycetes</taxon>
        <taxon>Mycobacteriales</taxon>
        <taxon>Corynebacteriaceae</taxon>
        <taxon>Corynebacterium</taxon>
    </lineage>
</organism>
<keyword id="KW-0028">Amino-acid biosynthesis</keyword>
<keyword id="KW-0067">ATP-binding</keyword>
<keyword id="KW-0963">Cytoplasm</keyword>
<keyword id="KW-0418">Kinase</keyword>
<keyword id="KW-0547">Nucleotide-binding</keyword>
<keyword id="KW-0641">Proline biosynthesis</keyword>
<keyword id="KW-1185">Reference proteome</keyword>
<keyword id="KW-0808">Transferase</keyword>
<evidence type="ECO:0000255" key="1">
    <source>
        <dbReference type="HAMAP-Rule" id="MF_00456"/>
    </source>
</evidence>
<evidence type="ECO:0000305" key="2"/>
<gene>
    <name evidence="1" type="primary">proB</name>
    <name type="ordered locus">jk0563</name>
</gene>
<dbReference type="EC" id="2.7.2.11" evidence="1"/>
<dbReference type="EMBL" id="CR931997">
    <property type="protein sequence ID" value="CAI36722.1"/>
    <property type="status" value="ALT_INIT"/>
    <property type="molecule type" value="Genomic_DNA"/>
</dbReference>
<dbReference type="RefSeq" id="WP_005296466.1">
    <property type="nucleotide sequence ID" value="NC_007164.1"/>
</dbReference>
<dbReference type="SMR" id="Q4JWT5"/>
<dbReference type="STRING" id="306537.jk0563"/>
<dbReference type="GeneID" id="92738066"/>
<dbReference type="KEGG" id="cjk:jk0563"/>
<dbReference type="eggNOG" id="COG0263">
    <property type="taxonomic scope" value="Bacteria"/>
</dbReference>
<dbReference type="HOGENOM" id="CLU_025400_2_0_11"/>
<dbReference type="OrthoDB" id="9804434at2"/>
<dbReference type="UniPathway" id="UPA00098">
    <property type="reaction ID" value="UER00359"/>
</dbReference>
<dbReference type="Proteomes" id="UP000000545">
    <property type="component" value="Chromosome"/>
</dbReference>
<dbReference type="GO" id="GO:0005829">
    <property type="term" value="C:cytosol"/>
    <property type="evidence" value="ECO:0007669"/>
    <property type="project" value="TreeGrafter"/>
</dbReference>
<dbReference type="GO" id="GO:0005524">
    <property type="term" value="F:ATP binding"/>
    <property type="evidence" value="ECO:0007669"/>
    <property type="project" value="UniProtKB-KW"/>
</dbReference>
<dbReference type="GO" id="GO:0004349">
    <property type="term" value="F:glutamate 5-kinase activity"/>
    <property type="evidence" value="ECO:0007669"/>
    <property type="project" value="UniProtKB-UniRule"/>
</dbReference>
<dbReference type="GO" id="GO:0003723">
    <property type="term" value="F:RNA binding"/>
    <property type="evidence" value="ECO:0007669"/>
    <property type="project" value="InterPro"/>
</dbReference>
<dbReference type="GO" id="GO:0055129">
    <property type="term" value="P:L-proline biosynthetic process"/>
    <property type="evidence" value="ECO:0007669"/>
    <property type="project" value="UniProtKB-UniRule"/>
</dbReference>
<dbReference type="CDD" id="cd04242">
    <property type="entry name" value="AAK_G5K_ProB"/>
    <property type="match status" value="1"/>
</dbReference>
<dbReference type="CDD" id="cd21157">
    <property type="entry name" value="PUA_G5K"/>
    <property type="match status" value="1"/>
</dbReference>
<dbReference type="FunFam" id="3.40.1160.10:FF:000018">
    <property type="entry name" value="Glutamate 5-kinase"/>
    <property type="match status" value="1"/>
</dbReference>
<dbReference type="Gene3D" id="3.40.1160.10">
    <property type="entry name" value="Acetylglutamate kinase-like"/>
    <property type="match status" value="1"/>
</dbReference>
<dbReference type="Gene3D" id="2.30.130.10">
    <property type="entry name" value="PUA domain"/>
    <property type="match status" value="1"/>
</dbReference>
<dbReference type="HAMAP" id="MF_00456">
    <property type="entry name" value="ProB"/>
    <property type="match status" value="1"/>
</dbReference>
<dbReference type="InterPro" id="IPR036393">
    <property type="entry name" value="AceGlu_kinase-like_sf"/>
</dbReference>
<dbReference type="InterPro" id="IPR001048">
    <property type="entry name" value="Asp/Glu/Uridylate_kinase"/>
</dbReference>
<dbReference type="InterPro" id="IPR041739">
    <property type="entry name" value="G5K_ProB"/>
</dbReference>
<dbReference type="InterPro" id="IPR001057">
    <property type="entry name" value="Glu/AcGlu_kinase"/>
</dbReference>
<dbReference type="InterPro" id="IPR011529">
    <property type="entry name" value="Glu_5kinase"/>
</dbReference>
<dbReference type="InterPro" id="IPR005715">
    <property type="entry name" value="Glu_5kinase/COase_Synthase"/>
</dbReference>
<dbReference type="InterPro" id="IPR019797">
    <property type="entry name" value="Glutamate_5-kinase_CS"/>
</dbReference>
<dbReference type="InterPro" id="IPR002478">
    <property type="entry name" value="PUA"/>
</dbReference>
<dbReference type="InterPro" id="IPR015947">
    <property type="entry name" value="PUA-like_sf"/>
</dbReference>
<dbReference type="InterPro" id="IPR036974">
    <property type="entry name" value="PUA_sf"/>
</dbReference>
<dbReference type="NCBIfam" id="TIGR01027">
    <property type="entry name" value="proB"/>
    <property type="match status" value="1"/>
</dbReference>
<dbReference type="PANTHER" id="PTHR43654">
    <property type="entry name" value="GLUTAMATE 5-KINASE"/>
    <property type="match status" value="1"/>
</dbReference>
<dbReference type="PANTHER" id="PTHR43654:SF1">
    <property type="entry name" value="ISOPENTENYL PHOSPHATE KINASE"/>
    <property type="match status" value="1"/>
</dbReference>
<dbReference type="Pfam" id="PF00696">
    <property type="entry name" value="AA_kinase"/>
    <property type="match status" value="1"/>
</dbReference>
<dbReference type="Pfam" id="PF01472">
    <property type="entry name" value="PUA"/>
    <property type="match status" value="1"/>
</dbReference>
<dbReference type="PIRSF" id="PIRSF000729">
    <property type="entry name" value="GK"/>
    <property type="match status" value="1"/>
</dbReference>
<dbReference type="PRINTS" id="PR00474">
    <property type="entry name" value="GLU5KINASE"/>
</dbReference>
<dbReference type="SMART" id="SM00359">
    <property type="entry name" value="PUA"/>
    <property type="match status" value="1"/>
</dbReference>
<dbReference type="SUPFAM" id="SSF53633">
    <property type="entry name" value="Carbamate kinase-like"/>
    <property type="match status" value="1"/>
</dbReference>
<dbReference type="SUPFAM" id="SSF88697">
    <property type="entry name" value="PUA domain-like"/>
    <property type="match status" value="1"/>
</dbReference>
<dbReference type="PROSITE" id="PS00902">
    <property type="entry name" value="GLUTAMATE_5_KINASE"/>
    <property type="match status" value="1"/>
</dbReference>
<dbReference type="PROSITE" id="PS50890">
    <property type="entry name" value="PUA"/>
    <property type="match status" value="1"/>
</dbReference>